<proteinExistence type="evidence at transcript level"/>
<keyword id="KW-1185">Reference proteome</keyword>
<accession>O49998</accession>
<evidence type="ECO:0000305" key="1"/>
<protein>
    <recommendedName>
        <fullName>14-3-3-like protein F</fullName>
    </recommendedName>
</protein>
<name>1433F_TOBAC</name>
<comment type="similarity">
    <text evidence="1">Belongs to the 14-3-3 family.</text>
</comment>
<feature type="chain" id="PRO_0000058712" description="14-3-3-like protein F">
    <location>
        <begin position="1"/>
        <end position="258"/>
    </location>
</feature>
<dbReference type="EMBL" id="U91727">
    <property type="protein sequence ID" value="AAC49895.1"/>
    <property type="molecule type" value="mRNA"/>
</dbReference>
<dbReference type="PIR" id="T04131">
    <property type="entry name" value="T04131"/>
</dbReference>
<dbReference type="RefSeq" id="NP_001312636.1">
    <property type="nucleotide sequence ID" value="NM_001325707.1"/>
</dbReference>
<dbReference type="SMR" id="O49998"/>
<dbReference type="STRING" id="4097.O49998"/>
<dbReference type="PaxDb" id="4097-O49998"/>
<dbReference type="GeneID" id="107801900"/>
<dbReference type="KEGG" id="nta:107801900"/>
<dbReference type="OrthoDB" id="10260625at2759"/>
<dbReference type="PhylomeDB" id="O49998"/>
<dbReference type="Proteomes" id="UP000084051">
    <property type="component" value="Unplaced"/>
</dbReference>
<dbReference type="GO" id="GO:0005737">
    <property type="term" value="C:cytoplasm"/>
    <property type="evidence" value="ECO:0000318"/>
    <property type="project" value="GO_Central"/>
</dbReference>
<dbReference type="GO" id="GO:0008104">
    <property type="term" value="P:protein localization"/>
    <property type="evidence" value="ECO:0000318"/>
    <property type="project" value="GO_Central"/>
</dbReference>
<dbReference type="GO" id="GO:0007165">
    <property type="term" value="P:signal transduction"/>
    <property type="evidence" value="ECO:0000318"/>
    <property type="project" value="GO_Central"/>
</dbReference>
<dbReference type="FunFam" id="1.20.190.20:FF:000002">
    <property type="entry name" value="14-3-3 protein epsilon"/>
    <property type="match status" value="1"/>
</dbReference>
<dbReference type="Gene3D" id="1.20.190.20">
    <property type="entry name" value="14-3-3 domain"/>
    <property type="match status" value="1"/>
</dbReference>
<dbReference type="InterPro" id="IPR000308">
    <property type="entry name" value="14-3-3"/>
</dbReference>
<dbReference type="InterPro" id="IPR023409">
    <property type="entry name" value="14-3-3_CS"/>
</dbReference>
<dbReference type="InterPro" id="IPR036815">
    <property type="entry name" value="14-3-3_dom_sf"/>
</dbReference>
<dbReference type="InterPro" id="IPR023410">
    <property type="entry name" value="14-3-3_domain"/>
</dbReference>
<dbReference type="PANTHER" id="PTHR18860">
    <property type="entry name" value="14-3-3 PROTEIN"/>
    <property type="match status" value="1"/>
</dbReference>
<dbReference type="Pfam" id="PF00244">
    <property type="entry name" value="14-3-3"/>
    <property type="match status" value="1"/>
</dbReference>
<dbReference type="PIRSF" id="PIRSF000868">
    <property type="entry name" value="14-3-3"/>
    <property type="match status" value="1"/>
</dbReference>
<dbReference type="PRINTS" id="PR00305">
    <property type="entry name" value="1433ZETA"/>
</dbReference>
<dbReference type="SMART" id="SM00101">
    <property type="entry name" value="14_3_3"/>
    <property type="match status" value="1"/>
</dbReference>
<dbReference type="SUPFAM" id="SSF48445">
    <property type="entry name" value="14-3-3 protein"/>
    <property type="match status" value="1"/>
</dbReference>
<dbReference type="PROSITE" id="PS00796">
    <property type="entry name" value="1433_1"/>
    <property type="match status" value="1"/>
</dbReference>
<dbReference type="PROSITE" id="PS00797">
    <property type="entry name" value="1433_2"/>
    <property type="match status" value="1"/>
</dbReference>
<reference key="1">
    <citation type="journal article" date="1998" name="Planta">
        <title>Five new 14-3-3 isoforms from Nicotiana tabacum L.: implications for the phylogeny of plant 14-3-3 proteins.</title>
        <authorList>
            <person name="Piotrowski M."/>
            <person name="Oecking C."/>
        </authorList>
    </citation>
    <scope>NUCLEOTIDE SEQUENCE [MRNA]</scope>
</reference>
<sequence length="258" mass="29226">MSSSRDEFVYMAKLAEQAERYEEMVDFMEKVVTAADGGEELTIEERNLLSVAYKNVIGARRASWRIISSIEQKEESRGNEDHVTSIKTYRSKIESELTSICNGILKLLDSNLIRAASTGDSKVFYLKMKGDYHRYLAEFKTGAERKEAAENTLSSYKSAQDIANAELAPTHPIRLGLALNFSVFYYEILNSPDRACNLAKQAFDEAIAELDTLGEESYKDSTLIMQLLRDNLTLWTSDMQDEGTEEMKEVAKPDNEEH</sequence>
<organism>
    <name type="scientific">Nicotiana tabacum</name>
    <name type="common">Common tobacco</name>
    <dbReference type="NCBI Taxonomy" id="4097"/>
    <lineage>
        <taxon>Eukaryota</taxon>
        <taxon>Viridiplantae</taxon>
        <taxon>Streptophyta</taxon>
        <taxon>Embryophyta</taxon>
        <taxon>Tracheophyta</taxon>
        <taxon>Spermatophyta</taxon>
        <taxon>Magnoliopsida</taxon>
        <taxon>eudicotyledons</taxon>
        <taxon>Gunneridae</taxon>
        <taxon>Pentapetalae</taxon>
        <taxon>asterids</taxon>
        <taxon>lamiids</taxon>
        <taxon>Solanales</taxon>
        <taxon>Solanaceae</taxon>
        <taxon>Nicotianoideae</taxon>
        <taxon>Nicotianeae</taxon>
        <taxon>Nicotiana</taxon>
    </lineage>
</organism>